<comment type="function">
    <text>Hydrolyzes carbapenems such as imipenem, which are extended-spectrum beta-lactam antibiotics.</text>
</comment>
<comment type="catalytic activity">
    <reaction>
        <text>a beta-lactam + H2O = a substituted beta-amino acid</text>
        <dbReference type="Rhea" id="RHEA:20401"/>
        <dbReference type="ChEBI" id="CHEBI:15377"/>
        <dbReference type="ChEBI" id="CHEBI:35627"/>
        <dbReference type="ChEBI" id="CHEBI:140347"/>
        <dbReference type="EC" id="3.5.2.6"/>
    </reaction>
</comment>
<comment type="miscellaneous">
    <text evidence="4">The class A beta-lactamase family has a specific amino-acid numbering system, sometimes called Ambler or ABL numbering and often misspelt as Amber. A multiple sequence alignment was used to derive a consensus sequence and then the consensus was numbered taking into account insertions and deletions. This allows use of identical numbers, e.g. for active site residues, despite differences in protein length. UniProt always uses natural numbering of residues, hence there appear to be differences in numbering between this entry and some papers.</text>
</comment>
<comment type="similarity">
    <text evidence="3">Belongs to the class-A beta-lactamase family.</text>
</comment>
<proteinExistence type="evidence at protein level"/>
<organism>
    <name type="scientific">Enterobacter cloacae</name>
    <dbReference type="NCBI Taxonomy" id="550"/>
    <lineage>
        <taxon>Bacteria</taxon>
        <taxon>Pseudomonadati</taxon>
        <taxon>Pseudomonadota</taxon>
        <taxon>Gammaproteobacteria</taxon>
        <taxon>Enterobacterales</taxon>
        <taxon>Enterobacteriaceae</taxon>
        <taxon>Enterobacter</taxon>
        <taxon>Enterobacter cloacae complex</taxon>
    </lineage>
</organism>
<protein>
    <recommendedName>
        <fullName>Imipenem-hydrolyzing beta-lactamase</fullName>
        <ecNumber>3.5.2.6</ecNumber>
    </recommendedName>
    <alternativeName>
        <fullName>Carbapenemase</fullName>
    </alternativeName>
    <alternativeName>
        <fullName>NMC-A</fullName>
    </alternativeName>
</protein>
<reference key="1">
    <citation type="journal article" date="1994" name="Proc. Natl. Acad. Sci. U.S.A.">
        <title>Analysis of a carbapenem-hydrolyzing class A beta-lactamase from Enterobacter cloacae and of its LysR-type regulatory protein.</title>
        <authorList>
            <person name="Naas T."/>
            <person name="Nordmann P."/>
        </authorList>
    </citation>
    <scope>NUCLEOTIDE SEQUENCE [GENOMIC DNA]</scope>
    <scope>PROTEIN SEQUENCE OF 28-34</scope>
    <source>
        <strain>NOR-1</strain>
    </source>
</reference>
<reference key="2">
    <citation type="journal article" date="1991" name="Biochem. J.">
        <title>A standard numbering scheme for the class A beta-lactamases.</title>
        <authorList>
            <person name="Ambler R.P."/>
            <person name="Coulson A.F."/>
            <person name="Frere J.M."/>
            <person name="Ghuysen J.M."/>
            <person name="Joris B."/>
            <person name="Forsman M."/>
            <person name="Levesque R.C."/>
            <person name="Tiraby G."/>
            <person name="Waley S.G."/>
        </authorList>
    </citation>
    <scope>AMINO ACID NUMBERING SCHEME</scope>
</reference>
<reference key="3">
    <citation type="journal article" date="1999" name="J. Biol. Chem.">
        <title>Inhibition of the broad spectrum nonmetallocarbapenamase of class A (NMC-A) beta-lactamase from Enterobacter cloacae by monocyclic beta-lactams.</title>
        <authorList>
            <person name="Mourey L."/>
            <person name="Kotra L.P."/>
            <person name="Bellettini J."/>
            <person name="Bulychev A."/>
            <person name="O'Brien M."/>
            <person name="Miller M.J."/>
            <person name="Mobashery S."/>
            <person name="Samama J.-P."/>
        </authorList>
    </citation>
    <scope>X-RAY CRYSTALLOGRAPHY (1.89 ANGSTROMS)</scope>
    <source>
        <strain>NOR-1</strain>
    </source>
</reference>
<evidence type="ECO:0000250" key="1"/>
<evidence type="ECO:0000269" key="2">
    <source>
    </source>
</evidence>
<evidence type="ECO:0000305" key="3"/>
<evidence type="ECO:0000305" key="4">
    <source>
    </source>
</evidence>
<evidence type="ECO:0007829" key="5">
    <source>
        <dbReference type="PDB" id="1BUE"/>
    </source>
</evidence>
<feature type="signal peptide" evidence="2">
    <location>
        <begin position="1"/>
        <end position="27"/>
    </location>
</feature>
<feature type="chain" id="PRO_0000017000" description="Imipenem-hydrolyzing beta-lactamase">
    <location>
        <begin position="28"/>
        <end position="292"/>
    </location>
</feature>
<feature type="active site" description="Acyl-ester intermediate">
    <location>
        <position position="71"/>
    </location>
</feature>
<feature type="binding site" evidence="1">
    <location>
        <begin position="236"/>
        <end position="238"/>
    </location>
    <ligand>
        <name>substrate</name>
    </ligand>
</feature>
<feature type="disulfide bond">
    <location>
        <begin position="70"/>
        <end position="240"/>
    </location>
</feature>
<feature type="helix" evidence="5">
    <location>
        <begin position="32"/>
        <end position="42"/>
    </location>
</feature>
<feature type="strand" evidence="5">
    <location>
        <begin position="44"/>
        <end position="52"/>
    </location>
</feature>
<feature type="turn" evidence="5">
    <location>
        <begin position="53"/>
        <end position="55"/>
    </location>
</feature>
<feature type="strand" evidence="5">
    <location>
        <begin position="58"/>
        <end position="62"/>
    </location>
</feature>
<feature type="helix" evidence="5">
    <location>
        <begin position="70"/>
        <end position="73"/>
    </location>
</feature>
<feature type="helix" evidence="5">
    <location>
        <begin position="74"/>
        <end position="86"/>
    </location>
</feature>
<feature type="helix" evidence="5">
    <location>
        <begin position="108"/>
        <end position="112"/>
    </location>
</feature>
<feature type="turn" evidence="5">
    <location>
        <begin position="113"/>
        <end position="116"/>
    </location>
</feature>
<feature type="helix" evidence="5">
    <location>
        <begin position="120"/>
        <end position="129"/>
    </location>
</feature>
<feature type="helix" evidence="5">
    <location>
        <begin position="133"/>
        <end position="142"/>
    </location>
</feature>
<feature type="helix" evidence="5">
    <location>
        <begin position="146"/>
        <end position="156"/>
    </location>
</feature>
<feature type="helix" evidence="5">
    <location>
        <begin position="170"/>
        <end position="172"/>
    </location>
</feature>
<feature type="helix" evidence="5">
    <location>
        <begin position="185"/>
        <end position="197"/>
    </location>
</feature>
<feature type="strand" evidence="5">
    <location>
        <begin position="198"/>
        <end position="201"/>
    </location>
</feature>
<feature type="helix" evidence="5">
    <location>
        <begin position="203"/>
        <end position="214"/>
    </location>
</feature>
<feature type="turn" evidence="5">
    <location>
        <begin position="220"/>
        <end position="222"/>
    </location>
</feature>
<feature type="helix" evidence="5">
    <location>
        <begin position="223"/>
        <end position="226"/>
    </location>
</feature>
<feature type="strand" evidence="5">
    <location>
        <begin position="231"/>
        <end position="239"/>
    </location>
</feature>
<feature type="strand" evidence="5">
    <location>
        <begin position="246"/>
        <end position="253"/>
    </location>
</feature>
<feature type="strand" evidence="5">
    <location>
        <begin position="260"/>
        <end position="267"/>
    </location>
</feature>
<feature type="helix" evidence="5">
    <location>
        <begin position="277"/>
        <end position="289"/>
    </location>
</feature>
<dbReference type="EC" id="3.5.2.6"/>
<dbReference type="EMBL" id="Z21956">
    <property type="protein sequence ID" value="CAA79967.1"/>
    <property type="molecule type" value="Genomic_DNA"/>
</dbReference>
<dbReference type="PIR" id="S35915">
    <property type="entry name" value="S35915"/>
</dbReference>
<dbReference type="PDB" id="1BUE">
    <property type="method" value="X-ray"/>
    <property type="resolution" value="1.64 A"/>
    <property type="chains" value="A=28-292"/>
</dbReference>
<dbReference type="PDB" id="1BUL">
    <property type="method" value="X-ray"/>
    <property type="resolution" value="1.89 A"/>
    <property type="chains" value="A=28-292"/>
</dbReference>
<dbReference type="PDBsum" id="1BUE"/>
<dbReference type="PDBsum" id="1BUL"/>
<dbReference type="SMR" id="P52663"/>
<dbReference type="BindingDB" id="P52663"/>
<dbReference type="ChEMBL" id="CHEMBL4314"/>
<dbReference type="CARD" id="ARO:3003589">
    <property type="molecule name" value="NmcA"/>
    <property type="mechanism identifier" value="ARO:0001004"/>
    <property type="mechanism name" value="antibiotic inactivation"/>
</dbReference>
<dbReference type="ABCD" id="P52663">
    <property type="antibodies" value="1 sequenced antibody"/>
</dbReference>
<dbReference type="SABIO-RK" id="P52663"/>
<dbReference type="EvolutionaryTrace" id="P52663"/>
<dbReference type="GO" id="GO:0008800">
    <property type="term" value="F:beta-lactamase activity"/>
    <property type="evidence" value="ECO:0007669"/>
    <property type="project" value="UniProtKB-EC"/>
</dbReference>
<dbReference type="GO" id="GO:0030655">
    <property type="term" value="P:beta-lactam antibiotic catabolic process"/>
    <property type="evidence" value="ECO:0007669"/>
    <property type="project" value="InterPro"/>
</dbReference>
<dbReference type="GO" id="GO:0046677">
    <property type="term" value="P:response to antibiotic"/>
    <property type="evidence" value="ECO:0007669"/>
    <property type="project" value="UniProtKB-KW"/>
</dbReference>
<dbReference type="Gene3D" id="3.40.710.10">
    <property type="entry name" value="DD-peptidase/beta-lactamase superfamily"/>
    <property type="match status" value="1"/>
</dbReference>
<dbReference type="InterPro" id="IPR012338">
    <property type="entry name" value="Beta-lactam/transpept-like"/>
</dbReference>
<dbReference type="InterPro" id="IPR045155">
    <property type="entry name" value="Beta-lactam_cat"/>
</dbReference>
<dbReference type="InterPro" id="IPR000871">
    <property type="entry name" value="Beta-lactam_class-A"/>
</dbReference>
<dbReference type="NCBIfam" id="NF033103">
    <property type="entry name" value="bla_class_A"/>
    <property type="match status" value="1"/>
</dbReference>
<dbReference type="NCBIfam" id="NF000400">
    <property type="entry name" value="blaIMI"/>
    <property type="match status" value="1"/>
</dbReference>
<dbReference type="NCBIfam" id="NF000538">
    <property type="entry name" value="classA_carba"/>
    <property type="match status" value="1"/>
</dbReference>
<dbReference type="PANTHER" id="PTHR35333">
    <property type="entry name" value="BETA-LACTAMASE"/>
    <property type="match status" value="1"/>
</dbReference>
<dbReference type="PANTHER" id="PTHR35333:SF3">
    <property type="entry name" value="BETA-LACTAMASE-TYPE TRANSPEPTIDASE FOLD CONTAINING PROTEIN"/>
    <property type="match status" value="1"/>
</dbReference>
<dbReference type="Pfam" id="PF13354">
    <property type="entry name" value="Beta-lactamase2"/>
    <property type="match status" value="1"/>
</dbReference>
<dbReference type="PRINTS" id="PR00118">
    <property type="entry name" value="BLACTAMASEA"/>
</dbReference>
<dbReference type="SUPFAM" id="SSF56601">
    <property type="entry name" value="beta-lactamase/transpeptidase-like"/>
    <property type="match status" value="1"/>
</dbReference>
<sequence>MSLNVKQSRIAILFSSCLISISFFSQANTKGIDEIKNLETDFNGRIGVYALDTGSGKSFSYRANERFPLCSSFKGFLAAAVLKGSQDNRLNLNQIVNYNTRSLEFHSPITTKYKDNGMSLGDMAAAALQYSDNGATNIILERYIGGPEGMTKFMRSIGDEDFRLDRWELDLNTAIPGDERDTSTPAAVAKSLKTLALGNILSEHEKETYQTWLKGNTTGAARIRASVPSDWVVGDKTGSCGAYGTANDYAVVWPKNRAPLIISVYTTKNEKEAKHEDKVIAEASRIAIDNLK</sequence>
<accession>P52663</accession>
<name>BLAN_ENTCL</name>
<gene>
    <name type="primary">nmcA</name>
</gene>
<keyword id="KW-0002">3D-structure</keyword>
<keyword id="KW-0046">Antibiotic resistance</keyword>
<keyword id="KW-0903">Direct protein sequencing</keyword>
<keyword id="KW-1015">Disulfide bond</keyword>
<keyword id="KW-0378">Hydrolase</keyword>
<keyword id="KW-0732">Signal</keyword>